<protein>
    <recommendedName>
        <fullName evidence="1">Nucleoside diphosphate kinase</fullName>
        <shortName evidence="1">NDK</shortName>
        <shortName evidence="1">NDP kinase</shortName>
        <ecNumber evidence="1">2.7.4.6</ecNumber>
    </recommendedName>
    <alternativeName>
        <fullName evidence="1">Nucleoside-2-P kinase</fullName>
    </alternativeName>
</protein>
<name>NDK_BURTA</name>
<reference key="1">
    <citation type="journal article" date="2005" name="BMC Genomics">
        <title>Bacterial genome adaptation to niches: divergence of the potential virulence genes in three Burkholderia species of different survival strategies.</title>
        <authorList>
            <person name="Kim H.S."/>
            <person name="Schell M.A."/>
            <person name="Yu Y."/>
            <person name="Ulrich R.L."/>
            <person name="Sarria S.H."/>
            <person name="Nierman W.C."/>
            <person name="DeShazer D."/>
        </authorList>
    </citation>
    <scope>NUCLEOTIDE SEQUENCE [LARGE SCALE GENOMIC DNA]</scope>
    <source>
        <strain>ATCC 700388 / DSM 13276 / CCUG 48851 / CIP 106301 / E264</strain>
    </source>
</reference>
<comment type="function">
    <text evidence="1">Major role in the synthesis of nucleoside triphosphates other than ATP. The ATP gamma phosphate is transferred to the NDP beta phosphate via a ping-pong mechanism, using a phosphorylated active-site intermediate.</text>
</comment>
<comment type="catalytic activity">
    <reaction evidence="1">
        <text>a 2'-deoxyribonucleoside 5'-diphosphate + ATP = a 2'-deoxyribonucleoside 5'-triphosphate + ADP</text>
        <dbReference type="Rhea" id="RHEA:44640"/>
        <dbReference type="ChEBI" id="CHEBI:30616"/>
        <dbReference type="ChEBI" id="CHEBI:61560"/>
        <dbReference type="ChEBI" id="CHEBI:73316"/>
        <dbReference type="ChEBI" id="CHEBI:456216"/>
        <dbReference type="EC" id="2.7.4.6"/>
    </reaction>
</comment>
<comment type="catalytic activity">
    <reaction evidence="1">
        <text>a ribonucleoside 5'-diphosphate + ATP = a ribonucleoside 5'-triphosphate + ADP</text>
        <dbReference type="Rhea" id="RHEA:18113"/>
        <dbReference type="ChEBI" id="CHEBI:30616"/>
        <dbReference type="ChEBI" id="CHEBI:57930"/>
        <dbReference type="ChEBI" id="CHEBI:61557"/>
        <dbReference type="ChEBI" id="CHEBI:456216"/>
        <dbReference type="EC" id="2.7.4.6"/>
    </reaction>
</comment>
<comment type="cofactor">
    <cofactor evidence="1">
        <name>Mg(2+)</name>
        <dbReference type="ChEBI" id="CHEBI:18420"/>
    </cofactor>
</comment>
<comment type="subunit">
    <text evidence="1">Homotetramer.</text>
</comment>
<comment type="subcellular location">
    <subcellularLocation>
        <location evidence="1">Cytoplasm</location>
    </subcellularLocation>
</comment>
<comment type="similarity">
    <text evidence="1">Belongs to the NDK family.</text>
</comment>
<proteinExistence type="evidence at protein level"/>
<sequence>MALERTLSIIKPDAVAKNVIGQIYSRFENAGLKIVAARMAHLSRADAEKFYAVHAERPFFKDLVEFMISGPVMIQVLEGEDAILKNRDLMGATDPKKAEKGTIRADFADSIDANAVHGSDAPETARVEIAFFFPEMNVYSR</sequence>
<keyword id="KW-0002">3D-structure</keyword>
<keyword id="KW-0067">ATP-binding</keyword>
<keyword id="KW-0963">Cytoplasm</keyword>
<keyword id="KW-0418">Kinase</keyword>
<keyword id="KW-0460">Magnesium</keyword>
<keyword id="KW-0479">Metal-binding</keyword>
<keyword id="KW-0546">Nucleotide metabolism</keyword>
<keyword id="KW-0547">Nucleotide-binding</keyword>
<keyword id="KW-0597">Phosphoprotein</keyword>
<keyword id="KW-0808">Transferase</keyword>
<dbReference type="EC" id="2.7.4.6" evidence="1"/>
<dbReference type="EMBL" id="CP000086">
    <property type="protein sequence ID" value="ABC37309.1"/>
    <property type="molecule type" value="Genomic_DNA"/>
</dbReference>
<dbReference type="RefSeq" id="WP_009890817.1">
    <property type="nucleotide sequence ID" value="NZ_CP008785.1"/>
</dbReference>
<dbReference type="PDB" id="4DUT">
    <property type="method" value="X-ray"/>
    <property type="resolution" value="2.50 A"/>
    <property type="chains" value="A/B=1-141"/>
</dbReference>
<dbReference type="PDB" id="4EK2">
    <property type="method" value="X-ray"/>
    <property type="resolution" value="2.00 A"/>
    <property type="chains" value="A/B=1-141"/>
</dbReference>
<dbReference type="PDB" id="4HR2">
    <property type="method" value="X-ray"/>
    <property type="resolution" value="1.95 A"/>
    <property type="chains" value="A/B=1-141"/>
</dbReference>
<dbReference type="PDBsum" id="4DUT"/>
<dbReference type="PDBsum" id="4EK2"/>
<dbReference type="PDBsum" id="4HR2"/>
<dbReference type="SMR" id="Q2SWE7"/>
<dbReference type="GeneID" id="45121949"/>
<dbReference type="KEGG" id="bte:BTH_I2231"/>
<dbReference type="HOGENOM" id="CLU_060216_8_1_4"/>
<dbReference type="BRENDA" id="2.7.4.6">
    <property type="organism ID" value="8156"/>
</dbReference>
<dbReference type="EvolutionaryTrace" id="Q2SWE7"/>
<dbReference type="Proteomes" id="UP000001930">
    <property type="component" value="Chromosome I"/>
</dbReference>
<dbReference type="GO" id="GO:0005737">
    <property type="term" value="C:cytoplasm"/>
    <property type="evidence" value="ECO:0007669"/>
    <property type="project" value="UniProtKB-SubCell"/>
</dbReference>
<dbReference type="GO" id="GO:0005524">
    <property type="term" value="F:ATP binding"/>
    <property type="evidence" value="ECO:0007669"/>
    <property type="project" value="UniProtKB-UniRule"/>
</dbReference>
<dbReference type="GO" id="GO:0046872">
    <property type="term" value="F:metal ion binding"/>
    <property type="evidence" value="ECO:0007669"/>
    <property type="project" value="UniProtKB-KW"/>
</dbReference>
<dbReference type="GO" id="GO:0004550">
    <property type="term" value="F:nucleoside diphosphate kinase activity"/>
    <property type="evidence" value="ECO:0007669"/>
    <property type="project" value="UniProtKB-UniRule"/>
</dbReference>
<dbReference type="GO" id="GO:0006241">
    <property type="term" value="P:CTP biosynthetic process"/>
    <property type="evidence" value="ECO:0007669"/>
    <property type="project" value="UniProtKB-UniRule"/>
</dbReference>
<dbReference type="GO" id="GO:0006183">
    <property type="term" value="P:GTP biosynthetic process"/>
    <property type="evidence" value="ECO:0007669"/>
    <property type="project" value="UniProtKB-UniRule"/>
</dbReference>
<dbReference type="GO" id="GO:0006228">
    <property type="term" value="P:UTP biosynthetic process"/>
    <property type="evidence" value="ECO:0007669"/>
    <property type="project" value="UniProtKB-UniRule"/>
</dbReference>
<dbReference type="CDD" id="cd04413">
    <property type="entry name" value="NDPk_I"/>
    <property type="match status" value="1"/>
</dbReference>
<dbReference type="FunFam" id="3.30.70.141:FF:000001">
    <property type="entry name" value="Nucleoside diphosphate kinase"/>
    <property type="match status" value="1"/>
</dbReference>
<dbReference type="Gene3D" id="3.30.70.141">
    <property type="entry name" value="Nucleoside diphosphate kinase-like domain"/>
    <property type="match status" value="1"/>
</dbReference>
<dbReference type="HAMAP" id="MF_00451">
    <property type="entry name" value="NDP_kinase"/>
    <property type="match status" value="1"/>
</dbReference>
<dbReference type="InterPro" id="IPR034907">
    <property type="entry name" value="NDK-like_dom"/>
</dbReference>
<dbReference type="InterPro" id="IPR036850">
    <property type="entry name" value="NDK-like_dom_sf"/>
</dbReference>
<dbReference type="InterPro" id="IPR001564">
    <property type="entry name" value="Nucleoside_diP_kinase"/>
</dbReference>
<dbReference type="InterPro" id="IPR023005">
    <property type="entry name" value="Nucleoside_diP_kinase_AS"/>
</dbReference>
<dbReference type="NCBIfam" id="NF001908">
    <property type="entry name" value="PRK00668.1"/>
    <property type="match status" value="1"/>
</dbReference>
<dbReference type="PANTHER" id="PTHR46161">
    <property type="entry name" value="NUCLEOSIDE DIPHOSPHATE KINASE"/>
    <property type="match status" value="1"/>
</dbReference>
<dbReference type="PANTHER" id="PTHR46161:SF3">
    <property type="entry name" value="NUCLEOSIDE DIPHOSPHATE KINASE DDB_G0292928-RELATED"/>
    <property type="match status" value="1"/>
</dbReference>
<dbReference type="Pfam" id="PF00334">
    <property type="entry name" value="NDK"/>
    <property type="match status" value="1"/>
</dbReference>
<dbReference type="PRINTS" id="PR01243">
    <property type="entry name" value="NUCDPKINASE"/>
</dbReference>
<dbReference type="SMART" id="SM00562">
    <property type="entry name" value="NDK"/>
    <property type="match status" value="1"/>
</dbReference>
<dbReference type="SUPFAM" id="SSF54919">
    <property type="entry name" value="Nucleoside diphosphate kinase, NDK"/>
    <property type="match status" value="1"/>
</dbReference>
<dbReference type="PROSITE" id="PS00469">
    <property type="entry name" value="NDPK"/>
    <property type="match status" value="1"/>
</dbReference>
<dbReference type="PROSITE" id="PS51374">
    <property type="entry name" value="NDPK_LIKE"/>
    <property type="match status" value="1"/>
</dbReference>
<evidence type="ECO:0000255" key="1">
    <source>
        <dbReference type="HAMAP-Rule" id="MF_00451"/>
    </source>
</evidence>
<evidence type="ECO:0007829" key="2">
    <source>
        <dbReference type="PDB" id="4EK2"/>
    </source>
</evidence>
<evidence type="ECO:0007829" key="3">
    <source>
        <dbReference type="PDB" id="4HR2"/>
    </source>
</evidence>
<organism>
    <name type="scientific">Burkholderia thailandensis (strain ATCC 700388 / DSM 13276 / CCUG 48851 / CIP 106301 / E264)</name>
    <dbReference type="NCBI Taxonomy" id="271848"/>
    <lineage>
        <taxon>Bacteria</taxon>
        <taxon>Pseudomonadati</taxon>
        <taxon>Pseudomonadota</taxon>
        <taxon>Betaproteobacteria</taxon>
        <taxon>Burkholderiales</taxon>
        <taxon>Burkholderiaceae</taxon>
        <taxon>Burkholderia</taxon>
        <taxon>pseudomallei group</taxon>
    </lineage>
</organism>
<accession>Q2SWE7</accession>
<gene>
    <name evidence="1" type="primary">ndk</name>
    <name type="ordered locus">BTH_I2231</name>
</gene>
<feature type="chain" id="PRO_0000242495" description="Nucleoside diphosphate kinase">
    <location>
        <begin position="1"/>
        <end position="141"/>
    </location>
</feature>
<feature type="active site" description="Pros-phosphohistidine intermediate" evidence="1">
    <location>
        <position position="117"/>
    </location>
</feature>
<feature type="binding site" evidence="1">
    <location>
        <position position="11"/>
    </location>
    <ligand>
        <name>ATP</name>
        <dbReference type="ChEBI" id="CHEBI:30616"/>
    </ligand>
</feature>
<feature type="binding site" evidence="1">
    <location>
        <position position="59"/>
    </location>
    <ligand>
        <name>ATP</name>
        <dbReference type="ChEBI" id="CHEBI:30616"/>
    </ligand>
</feature>
<feature type="binding site" evidence="1">
    <location>
        <position position="87"/>
    </location>
    <ligand>
        <name>ATP</name>
        <dbReference type="ChEBI" id="CHEBI:30616"/>
    </ligand>
</feature>
<feature type="binding site" evidence="1">
    <location>
        <position position="93"/>
    </location>
    <ligand>
        <name>ATP</name>
        <dbReference type="ChEBI" id="CHEBI:30616"/>
    </ligand>
</feature>
<feature type="binding site" evidence="1">
    <location>
        <position position="104"/>
    </location>
    <ligand>
        <name>ATP</name>
        <dbReference type="ChEBI" id="CHEBI:30616"/>
    </ligand>
</feature>
<feature type="binding site" evidence="1">
    <location>
        <position position="114"/>
    </location>
    <ligand>
        <name>ATP</name>
        <dbReference type="ChEBI" id="CHEBI:30616"/>
    </ligand>
</feature>
<feature type="strand" evidence="3">
    <location>
        <begin position="3"/>
        <end position="10"/>
    </location>
</feature>
<feature type="helix" evidence="3">
    <location>
        <begin position="12"/>
        <end position="16"/>
    </location>
</feature>
<feature type="helix" evidence="3">
    <location>
        <begin position="20"/>
        <end position="29"/>
    </location>
</feature>
<feature type="strand" evidence="3">
    <location>
        <begin position="33"/>
        <end position="40"/>
    </location>
</feature>
<feature type="helix" evidence="3">
    <location>
        <begin position="44"/>
        <end position="50"/>
    </location>
</feature>
<feature type="helix" evidence="3">
    <location>
        <begin position="52"/>
        <end position="54"/>
    </location>
</feature>
<feature type="helix" evidence="3">
    <location>
        <begin position="60"/>
        <end position="67"/>
    </location>
</feature>
<feature type="strand" evidence="3">
    <location>
        <begin position="72"/>
        <end position="80"/>
    </location>
</feature>
<feature type="helix" evidence="3">
    <location>
        <begin position="82"/>
        <end position="90"/>
    </location>
</feature>
<feature type="turn" evidence="3">
    <location>
        <begin position="95"/>
        <end position="97"/>
    </location>
</feature>
<feature type="helix" evidence="3">
    <location>
        <begin position="103"/>
        <end position="107"/>
    </location>
</feature>
<feature type="strand" evidence="2">
    <location>
        <begin position="110"/>
        <end position="113"/>
    </location>
</feature>
<feature type="strand" evidence="3">
    <location>
        <begin position="115"/>
        <end position="118"/>
    </location>
</feature>
<feature type="helix" evidence="3">
    <location>
        <begin position="122"/>
        <end position="132"/>
    </location>
</feature>
<feature type="helix" evidence="3">
    <location>
        <begin position="135"/>
        <end position="137"/>
    </location>
</feature>